<dbReference type="EMBL" id="EF101562">
    <property type="protein sequence ID" value="ABK97617.1"/>
    <property type="molecule type" value="mRNA"/>
</dbReference>
<dbReference type="RefSeq" id="NP_001073164.1">
    <property type="nucleotide sequence ID" value="NM_001079696.1"/>
</dbReference>
<dbReference type="RefSeq" id="XP_014988327.1">
    <property type="nucleotide sequence ID" value="XM_015132841.2"/>
</dbReference>
<dbReference type="RefSeq" id="XP_014988328.1">
    <property type="nucleotide sequence ID" value="XM_015132842.2"/>
</dbReference>
<dbReference type="RefSeq" id="XP_014988329.1">
    <property type="nucleotide sequence ID" value="XM_015132843.2"/>
</dbReference>
<dbReference type="SMR" id="A1E2I5"/>
<dbReference type="FunCoup" id="A1E2I5">
    <property type="interactions" value="235"/>
</dbReference>
<dbReference type="STRING" id="9544.ENSMMUP00000068364"/>
<dbReference type="Ensembl" id="ENSMMUT00000025665.4">
    <property type="protein sequence ID" value="ENSMMUP00000024010.3"/>
    <property type="gene ID" value="ENSMMUG00000044257.2"/>
</dbReference>
<dbReference type="Ensembl" id="ENSMMUT00000093227.1">
    <property type="protein sequence ID" value="ENSMMUP00000061903.1"/>
    <property type="gene ID" value="ENSMMUG00000044257.2"/>
</dbReference>
<dbReference type="Ensembl" id="ENSMMUT00000100424.1">
    <property type="protein sequence ID" value="ENSMMUP00000070693.1"/>
    <property type="gene ID" value="ENSMMUG00000044257.2"/>
</dbReference>
<dbReference type="Ensembl" id="ENSMMUT00000105314.1">
    <property type="protein sequence ID" value="ENSMMUP00000068364.1"/>
    <property type="gene ID" value="ENSMMUG00000044257.2"/>
</dbReference>
<dbReference type="GeneID" id="780935"/>
<dbReference type="KEGG" id="mcc:780935"/>
<dbReference type="CTD" id="4600"/>
<dbReference type="VEuPathDB" id="HostDB:ENSMMUG00000044257"/>
<dbReference type="VGNC" id="VGNC:81723">
    <property type="gene designation" value="MX2"/>
</dbReference>
<dbReference type="GeneTree" id="ENSGT00940000163266"/>
<dbReference type="InParanoid" id="A1E2I5"/>
<dbReference type="OMA" id="NFANFHN"/>
<dbReference type="OrthoDB" id="5061070at2759"/>
<dbReference type="Proteomes" id="UP000006718">
    <property type="component" value="Chromosome 3"/>
</dbReference>
<dbReference type="Bgee" id="ENSMMUG00000044257">
    <property type="expression patterns" value="Expressed in spleen and 21 other cell types or tissues"/>
</dbReference>
<dbReference type="ExpressionAtlas" id="A1E2I5">
    <property type="expression patterns" value="baseline"/>
</dbReference>
<dbReference type="GO" id="GO:0005737">
    <property type="term" value="C:cytoplasm"/>
    <property type="evidence" value="ECO:0000318"/>
    <property type="project" value="GO_Central"/>
</dbReference>
<dbReference type="GO" id="GO:0005874">
    <property type="term" value="C:microtubule"/>
    <property type="evidence" value="ECO:0000318"/>
    <property type="project" value="GO_Central"/>
</dbReference>
<dbReference type="GO" id="GO:0005643">
    <property type="term" value="C:nuclear pore"/>
    <property type="evidence" value="ECO:0007669"/>
    <property type="project" value="Ensembl"/>
</dbReference>
<dbReference type="GO" id="GO:0005634">
    <property type="term" value="C:nucleus"/>
    <property type="evidence" value="ECO:0000318"/>
    <property type="project" value="GO_Central"/>
</dbReference>
<dbReference type="GO" id="GO:0005886">
    <property type="term" value="C:plasma membrane"/>
    <property type="evidence" value="ECO:0000318"/>
    <property type="project" value="GO_Central"/>
</dbReference>
<dbReference type="GO" id="GO:0098793">
    <property type="term" value="C:presynapse"/>
    <property type="evidence" value="ECO:0007669"/>
    <property type="project" value="GOC"/>
</dbReference>
<dbReference type="GO" id="GO:0045202">
    <property type="term" value="C:synapse"/>
    <property type="evidence" value="ECO:0000318"/>
    <property type="project" value="GO_Central"/>
</dbReference>
<dbReference type="GO" id="GO:0005525">
    <property type="term" value="F:GTP binding"/>
    <property type="evidence" value="ECO:0007669"/>
    <property type="project" value="UniProtKB-KW"/>
</dbReference>
<dbReference type="GO" id="GO:0003924">
    <property type="term" value="F:GTPase activity"/>
    <property type="evidence" value="ECO:0000318"/>
    <property type="project" value="GO_Central"/>
</dbReference>
<dbReference type="GO" id="GO:0008017">
    <property type="term" value="F:microtubule binding"/>
    <property type="evidence" value="ECO:0000318"/>
    <property type="project" value="GO_Central"/>
</dbReference>
<dbReference type="GO" id="GO:0051607">
    <property type="term" value="P:defense response to virus"/>
    <property type="evidence" value="ECO:0000318"/>
    <property type="project" value="GO_Central"/>
</dbReference>
<dbReference type="GO" id="GO:0045087">
    <property type="term" value="P:innate immune response"/>
    <property type="evidence" value="ECO:0007669"/>
    <property type="project" value="UniProtKB-KW"/>
</dbReference>
<dbReference type="GO" id="GO:0031623">
    <property type="term" value="P:receptor internalization"/>
    <property type="evidence" value="ECO:0000318"/>
    <property type="project" value="GO_Central"/>
</dbReference>
<dbReference type="GO" id="GO:0051726">
    <property type="term" value="P:regulation of cell cycle"/>
    <property type="evidence" value="ECO:0007669"/>
    <property type="project" value="Ensembl"/>
</dbReference>
<dbReference type="GO" id="GO:0046822">
    <property type="term" value="P:regulation of nucleocytoplasmic transport"/>
    <property type="evidence" value="ECO:0007669"/>
    <property type="project" value="Ensembl"/>
</dbReference>
<dbReference type="GO" id="GO:0035455">
    <property type="term" value="P:response to interferon-alpha"/>
    <property type="evidence" value="ECO:0007669"/>
    <property type="project" value="Ensembl"/>
</dbReference>
<dbReference type="GO" id="GO:0016185">
    <property type="term" value="P:synaptic vesicle budding from presynaptic endocytic zone membrane"/>
    <property type="evidence" value="ECO:0000318"/>
    <property type="project" value="GO_Central"/>
</dbReference>
<dbReference type="CDD" id="cd08771">
    <property type="entry name" value="DLP_1"/>
    <property type="match status" value="1"/>
</dbReference>
<dbReference type="FunFam" id="1.20.120.1240:FF:000007">
    <property type="entry name" value="Interferon-induced GTP-binding protein Mx1"/>
    <property type="match status" value="1"/>
</dbReference>
<dbReference type="FunFam" id="3.40.50.300:FF:000621">
    <property type="entry name" value="Interferon-induced GTP-binding protein Mx1"/>
    <property type="match status" value="1"/>
</dbReference>
<dbReference type="Gene3D" id="1.20.120.1240">
    <property type="entry name" value="Dynamin, middle domain"/>
    <property type="match status" value="1"/>
</dbReference>
<dbReference type="Gene3D" id="3.40.50.300">
    <property type="entry name" value="P-loop containing nucleotide triphosphate hydrolases"/>
    <property type="match status" value="1"/>
</dbReference>
<dbReference type="InterPro" id="IPR022812">
    <property type="entry name" value="Dynamin"/>
</dbReference>
<dbReference type="InterPro" id="IPR001401">
    <property type="entry name" value="Dynamin_GTPase"/>
</dbReference>
<dbReference type="InterPro" id="IPR019762">
    <property type="entry name" value="Dynamin_GTPase_CS"/>
</dbReference>
<dbReference type="InterPro" id="IPR045063">
    <property type="entry name" value="Dynamin_N"/>
</dbReference>
<dbReference type="InterPro" id="IPR000375">
    <property type="entry name" value="Dynamin_stalk"/>
</dbReference>
<dbReference type="InterPro" id="IPR030381">
    <property type="entry name" value="G_DYNAMIN_dom"/>
</dbReference>
<dbReference type="InterPro" id="IPR003130">
    <property type="entry name" value="GED"/>
</dbReference>
<dbReference type="InterPro" id="IPR020850">
    <property type="entry name" value="GED_dom"/>
</dbReference>
<dbReference type="InterPro" id="IPR027417">
    <property type="entry name" value="P-loop_NTPase"/>
</dbReference>
<dbReference type="PANTHER" id="PTHR11566">
    <property type="entry name" value="DYNAMIN"/>
    <property type="match status" value="1"/>
</dbReference>
<dbReference type="PANTHER" id="PTHR11566:SF46">
    <property type="entry name" value="INTERFERON-INDUCED GTP-BINDING PROTEIN MX2"/>
    <property type="match status" value="1"/>
</dbReference>
<dbReference type="Pfam" id="PF01031">
    <property type="entry name" value="Dynamin_M"/>
    <property type="match status" value="1"/>
</dbReference>
<dbReference type="Pfam" id="PF00350">
    <property type="entry name" value="Dynamin_N"/>
    <property type="match status" value="1"/>
</dbReference>
<dbReference type="Pfam" id="PF02212">
    <property type="entry name" value="GED"/>
    <property type="match status" value="1"/>
</dbReference>
<dbReference type="PRINTS" id="PR00195">
    <property type="entry name" value="DYNAMIN"/>
</dbReference>
<dbReference type="SMART" id="SM00053">
    <property type="entry name" value="DYNc"/>
    <property type="match status" value="1"/>
</dbReference>
<dbReference type="SMART" id="SM00302">
    <property type="entry name" value="GED"/>
    <property type="match status" value="1"/>
</dbReference>
<dbReference type="SUPFAM" id="SSF52540">
    <property type="entry name" value="P-loop containing nucleoside triphosphate hydrolases"/>
    <property type="match status" value="1"/>
</dbReference>
<dbReference type="PROSITE" id="PS00410">
    <property type="entry name" value="G_DYNAMIN_1"/>
    <property type="match status" value="1"/>
</dbReference>
<dbReference type="PROSITE" id="PS51718">
    <property type="entry name" value="G_DYNAMIN_2"/>
    <property type="match status" value="1"/>
</dbReference>
<dbReference type="PROSITE" id="PS51388">
    <property type="entry name" value="GED"/>
    <property type="match status" value="1"/>
</dbReference>
<name>MX2_MACMU</name>
<evidence type="ECO:0000250" key="1"/>
<evidence type="ECO:0000255" key="2"/>
<evidence type="ECO:0000255" key="3">
    <source>
        <dbReference type="PROSITE-ProRule" id="PRU00720"/>
    </source>
</evidence>
<evidence type="ECO:0000255" key="4">
    <source>
        <dbReference type="PROSITE-ProRule" id="PRU01055"/>
    </source>
</evidence>
<evidence type="ECO:0000256" key="5">
    <source>
        <dbReference type="SAM" id="MobiDB-lite"/>
    </source>
</evidence>
<evidence type="ECO:0000269" key="6">
    <source>
    </source>
</evidence>
<protein>
    <recommendedName>
        <fullName>Interferon-induced GTP-binding protein Mx2</fullName>
    </recommendedName>
    <alternativeName>
        <fullName>Myxovirus resistance protein 2</fullName>
    </alternativeName>
</protein>
<proteinExistence type="evidence at transcript level"/>
<comment type="function">
    <text evidence="1">Interferon-induced dynamin-like GTPase with antiviral activity.</text>
</comment>
<comment type="subcellular location">
    <subcellularLocation>
        <location evidence="1">Cytoplasm</location>
    </subcellularLocation>
    <subcellularLocation>
        <location evidence="1">Nucleus</location>
    </subcellularLocation>
</comment>
<comment type="induction">
    <text evidence="6">By type I and type III interferons.</text>
</comment>
<comment type="similarity">
    <text evidence="4">Belongs to the TRAFAC class dynamin-like GTPase superfamily. Dynamin/Fzo/YdjA family.</text>
</comment>
<reference key="1">
    <citation type="submission" date="2006-11" db="EMBL/GenBank/DDBJ databases">
        <authorList>
            <person name="Miller C.J."/>
            <person name="Dutra J.C."/>
        </authorList>
    </citation>
    <scope>NUCLEOTIDE SEQUENCE [MRNA]</scope>
</reference>
<reference key="2">
    <citation type="journal article" date="2007" name="Microbes Infect.">
        <title>The Mx GTPase family of interferon-induced antiviral proteins.</title>
        <authorList>
            <person name="Haller O."/>
            <person name="Stertz S."/>
            <person name="Kochs G."/>
        </authorList>
    </citation>
    <scope>REVIEW</scope>
    <scope>INDUCTION</scope>
</reference>
<gene>
    <name type="primary">MX2</name>
</gene>
<feature type="chain" id="PRO_0000319628" description="Interferon-induced GTP-binding protein Mx2">
    <location>
        <begin position="1"/>
        <end position="715"/>
    </location>
</feature>
<feature type="domain" description="Dynamin-type G" evidence="4">
    <location>
        <begin position="115"/>
        <end position="387"/>
    </location>
</feature>
<feature type="domain" description="GED" evidence="3">
    <location>
        <begin position="623"/>
        <end position="714"/>
    </location>
</feature>
<feature type="region of interest" description="Disordered" evidence="5">
    <location>
        <begin position="1"/>
        <end position="24"/>
    </location>
</feature>
<feature type="region of interest" description="Disordered" evidence="5">
    <location>
        <begin position="69"/>
        <end position="88"/>
    </location>
</feature>
<feature type="region of interest" description="G1 motif" evidence="4">
    <location>
        <begin position="125"/>
        <end position="132"/>
    </location>
</feature>
<feature type="region of interest" description="G2 motif" evidence="4">
    <location>
        <begin position="150"/>
        <end position="152"/>
    </location>
</feature>
<feature type="region of interest" description="G3 motif" evidence="4">
    <location>
        <begin position="225"/>
        <end position="228"/>
    </location>
</feature>
<feature type="region of interest" description="G4 motif" evidence="4">
    <location>
        <begin position="294"/>
        <end position="297"/>
    </location>
</feature>
<feature type="region of interest" description="G5 motif" evidence="4">
    <location>
        <begin position="326"/>
        <end position="329"/>
    </location>
</feature>
<feature type="compositionally biased region" description="Basic residues" evidence="5">
    <location>
        <begin position="1"/>
        <end position="14"/>
    </location>
</feature>
<feature type="compositionally biased region" description="Polar residues" evidence="5">
    <location>
        <begin position="69"/>
        <end position="80"/>
    </location>
</feature>
<feature type="binding site" evidence="2">
    <location>
        <begin position="125"/>
        <end position="132"/>
    </location>
    <ligand>
        <name>GTP</name>
        <dbReference type="ChEBI" id="CHEBI:37565"/>
    </ligand>
</feature>
<feature type="binding site" evidence="2">
    <location>
        <begin position="225"/>
        <end position="229"/>
    </location>
    <ligand>
        <name>GTP</name>
        <dbReference type="ChEBI" id="CHEBI:37565"/>
    </ligand>
</feature>
<feature type="binding site" evidence="2">
    <location>
        <begin position="294"/>
        <end position="297"/>
    </location>
    <ligand>
        <name>GTP</name>
        <dbReference type="ChEBI" id="CHEBI:37565"/>
    </ligand>
</feature>
<sequence length="715" mass="82123">MSKAHKSWPHRRRNQFSSQRSLKKEMNFFQQQPPPFGTVPPQMTFPPNWQGVEKDPAFLTKDFNLLTLNNQPLPGNTSQPRAKGPENNLHNQYEQKVRPYIDLIDSLRALGVEQDLALPAIAVIGDQSSGKSSVLEALSGVALPRGSGIVTRCPLVLKLKKQPYKAWAGRISYQNTEIELQDPGQVEKEIHKAQNVMAGNGLGISHELISLEITSPEVPDLTIIDLPGIARVAVGNQPRDIGLQIKALIKRYIQRQQTINLVVVPCNVDIATTEALSMAHEVDPEGDRTIGILTKPDLMDRGTEKSIINVVRNLTYPLKKGYMIVKCRGQQEIINRLSLAEATKKEITFFQTHPCFRVLLEEGSATVPRLAERLTAELITHIQKSLPLLEEQIRESHQKATEELRRCGADIPSQDADKMFFLIEKIKMFNQDIEKLIEGEEVVRENETRLYNKIREDFKNWIGILATNTQKVKNIIHEEVEKYEKQYRGKELLGFVNYKTFETIVHQYIQHLVEPALSMLQKAVEIIRQAFVNMAKKHFGEFFNLNHTVQSKIEDIKVRHTEKAENMIQLQFRMEQIVFCQDQIYSVVVKKVREEIFNPLGKPSQNMKLNSHFPINESSVSSFNEIGVHLNAYFSETSTRLANQIPFIIQYFMLRENGDSLQKAMMQILQEKNRYSWLLQEQSETATKRRMLKERIYRLTQARHALCQFSSKEIH</sequence>
<accession>A1E2I5</accession>
<keyword id="KW-0051">Antiviral defense</keyword>
<keyword id="KW-0963">Cytoplasm</keyword>
<keyword id="KW-0342">GTP-binding</keyword>
<keyword id="KW-0391">Immunity</keyword>
<keyword id="KW-0399">Innate immunity</keyword>
<keyword id="KW-0547">Nucleotide-binding</keyword>
<keyword id="KW-0539">Nucleus</keyword>
<keyword id="KW-1185">Reference proteome</keyword>
<organism>
    <name type="scientific">Macaca mulatta</name>
    <name type="common">Rhesus macaque</name>
    <dbReference type="NCBI Taxonomy" id="9544"/>
    <lineage>
        <taxon>Eukaryota</taxon>
        <taxon>Metazoa</taxon>
        <taxon>Chordata</taxon>
        <taxon>Craniata</taxon>
        <taxon>Vertebrata</taxon>
        <taxon>Euteleostomi</taxon>
        <taxon>Mammalia</taxon>
        <taxon>Eutheria</taxon>
        <taxon>Euarchontoglires</taxon>
        <taxon>Primates</taxon>
        <taxon>Haplorrhini</taxon>
        <taxon>Catarrhini</taxon>
        <taxon>Cercopithecidae</taxon>
        <taxon>Cercopithecinae</taxon>
        <taxon>Macaca</taxon>
    </lineage>
</organism>